<evidence type="ECO:0000250" key="1"/>
<evidence type="ECO:0000305" key="2"/>
<reference key="1">
    <citation type="journal article" date="2002" name="Proc. Natl. Acad. Sci. U.S.A.">
        <title>The genome sequence of Bifidobacterium longum reflects its adaptation to the human gastrointestinal tract.</title>
        <authorList>
            <person name="Schell M.A."/>
            <person name="Karmirantzou M."/>
            <person name="Snel B."/>
            <person name="Vilanova D."/>
            <person name="Berger B."/>
            <person name="Pessi G."/>
            <person name="Zwahlen M.-C."/>
            <person name="Desiere F."/>
            <person name="Bork P."/>
            <person name="Delley M."/>
            <person name="Pridmore R.D."/>
            <person name="Arigoni F."/>
        </authorList>
    </citation>
    <scope>NUCLEOTIDE SEQUENCE [LARGE SCALE GENOMIC DNA]</scope>
    <source>
        <strain>NCC 2705</strain>
    </source>
</reference>
<feature type="chain" id="PRO_0000142297" description="Aspartate carbamoyltransferase regulatory chain">
    <location>
        <begin position="1"/>
        <end position="139"/>
    </location>
</feature>
<feature type="binding site" evidence="1">
    <location>
        <position position="101"/>
    </location>
    <ligand>
        <name>Zn(2+)</name>
        <dbReference type="ChEBI" id="CHEBI:29105"/>
    </ligand>
</feature>
<feature type="binding site" evidence="1">
    <location>
        <position position="106"/>
    </location>
    <ligand>
        <name>Zn(2+)</name>
        <dbReference type="ChEBI" id="CHEBI:29105"/>
    </ligand>
</feature>
<feature type="binding site" evidence="1">
    <location>
        <position position="130"/>
    </location>
    <ligand>
        <name>Zn(2+)</name>
        <dbReference type="ChEBI" id="CHEBI:29105"/>
    </ligand>
</feature>
<feature type="binding site" evidence="1">
    <location>
        <position position="133"/>
    </location>
    <ligand>
        <name>Zn(2+)</name>
        <dbReference type="ChEBI" id="CHEBI:29105"/>
    </ligand>
</feature>
<accession>Q8G656</accession>
<name>PYRI_BIFLO</name>
<sequence length="139" mass="15518">MEVTSIQNGIIIDHVPAGTSLKVLEYLKIDPAKTKLALIMNADSKRYGSKDIIKIEDDKDIDLDVLGFVARQATVDVVRGGKIVEKKQPNLPEHIVGVISCVNPRCVTTAEPGIKQMFHLVHSERLEYRCDYCDEEAKL</sequence>
<comment type="function">
    <text evidence="1">Involved in allosteric regulation of aspartate carbamoyltransferase.</text>
</comment>
<comment type="cofactor">
    <cofactor evidence="1">
        <name>Zn(2+)</name>
        <dbReference type="ChEBI" id="CHEBI:29105"/>
    </cofactor>
    <text evidence="1">Binds 1 zinc ion per subunit.</text>
</comment>
<comment type="subunit">
    <text evidence="1">Contains catalytic and regulatory chains.</text>
</comment>
<comment type="similarity">
    <text evidence="2">Belongs to the PyrI family.</text>
</comment>
<dbReference type="EMBL" id="AE014295">
    <property type="protein sequence ID" value="AAN24608.1"/>
    <property type="molecule type" value="Genomic_DNA"/>
</dbReference>
<dbReference type="RefSeq" id="NP_695972.1">
    <property type="nucleotide sequence ID" value="NC_004307.2"/>
</dbReference>
<dbReference type="RefSeq" id="WP_007052224.1">
    <property type="nucleotide sequence ID" value="NC_004307.2"/>
</dbReference>
<dbReference type="SMR" id="Q8G656"/>
<dbReference type="STRING" id="206672.BL0793"/>
<dbReference type="EnsemblBacteria" id="AAN24608">
    <property type="protein sequence ID" value="AAN24608"/>
    <property type="gene ID" value="BL0793"/>
</dbReference>
<dbReference type="KEGG" id="blo:BL0793"/>
<dbReference type="PATRIC" id="fig|206672.9.peg.494"/>
<dbReference type="HOGENOM" id="CLU_128576_0_0_11"/>
<dbReference type="OrthoDB" id="5599321at2"/>
<dbReference type="PhylomeDB" id="Q8G656"/>
<dbReference type="Proteomes" id="UP000000439">
    <property type="component" value="Chromosome"/>
</dbReference>
<dbReference type="GO" id="GO:0009347">
    <property type="term" value="C:aspartate carbamoyltransferase complex"/>
    <property type="evidence" value="ECO:0007669"/>
    <property type="project" value="InterPro"/>
</dbReference>
<dbReference type="GO" id="GO:0046872">
    <property type="term" value="F:metal ion binding"/>
    <property type="evidence" value="ECO:0007669"/>
    <property type="project" value="UniProtKB-KW"/>
</dbReference>
<dbReference type="GO" id="GO:0006207">
    <property type="term" value="P:'de novo' pyrimidine nucleobase biosynthetic process"/>
    <property type="evidence" value="ECO:0007669"/>
    <property type="project" value="InterPro"/>
</dbReference>
<dbReference type="GO" id="GO:0006221">
    <property type="term" value="P:pyrimidine nucleotide biosynthetic process"/>
    <property type="evidence" value="ECO:0007669"/>
    <property type="project" value="UniProtKB-KW"/>
</dbReference>
<dbReference type="Gene3D" id="2.30.30.20">
    <property type="entry name" value="Aspartate carbamoyltransferase regulatory subunit, C-terminal domain"/>
    <property type="match status" value="1"/>
</dbReference>
<dbReference type="Gene3D" id="3.30.70.140">
    <property type="entry name" value="Aspartate carbamoyltransferase regulatory subunit, N-terminal domain"/>
    <property type="match status" value="1"/>
</dbReference>
<dbReference type="InterPro" id="IPR020545">
    <property type="entry name" value="Asp_carbamoyltransf_reg_N"/>
</dbReference>
<dbReference type="InterPro" id="IPR002801">
    <property type="entry name" value="Asp_carbamoylTrfase_reg"/>
</dbReference>
<dbReference type="InterPro" id="IPR020542">
    <property type="entry name" value="Asp_carbamoyltrfase_reg_C"/>
</dbReference>
<dbReference type="InterPro" id="IPR036792">
    <property type="entry name" value="Asp_carbatrfase_reg_C_sf"/>
</dbReference>
<dbReference type="InterPro" id="IPR036793">
    <property type="entry name" value="Asp_carbatrfase_reg_N_sf"/>
</dbReference>
<dbReference type="NCBIfam" id="NF002063">
    <property type="entry name" value="PRK00893.1-3"/>
    <property type="match status" value="1"/>
</dbReference>
<dbReference type="PANTHER" id="PTHR35805">
    <property type="entry name" value="ASPARTATE CARBAMOYLTRANSFERASE REGULATORY CHAIN"/>
    <property type="match status" value="1"/>
</dbReference>
<dbReference type="PANTHER" id="PTHR35805:SF1">
    <property type="entry name" value="ASPARTATE CARBAMOYLTRANSFERASE REGULATORY CHAIN"/>
    <property type="match status" value="1"/>
</dbReference>
<dbReference type="Pfam" id="PF01948">
    <property type="entry name" value="PyrI"/>
    <property type="match status" value="1"/>
</dbReference>
<dbReference type="Pfam" id="PF02748">
    <property type="entry name" value="PyrI_C"/>
    <property type="match status" value="1"/>
</dbReference>
<dbReference type="SUPFAM" id="SSF57825">
    <property type="entry name" value="Aspartate carbamoyltransferase, Regulatory-chain, C-terminal domain"/>
    <property type="match status" value="1"/>
</dbReference>
<dbReference type="SUPFAM" id="SSF54893">
    <property type="entry name" value="Aspartate carbamoyltransferase, Regulatory-chain, N-terminal domain"/>
    <property type="match status" value="1"/>
</dbReference>
<keyword id="KW-0479">Metal-binding</keyword>
<keyword id="KW-0665">Pyrimidine biosynthesis</keyword>
<keyword id="KW-1185">Reference proteome</keyword>
<keyword id="KW-0862">Zinc</keyword>
<proteinExistence type="inferred from homology"/>
<protein>
    <recommendedName>
        <fullName>Aspartate carbamoyltransferase regulatory chain</fullName>
    </recommendedName>
</protein>
<gene>
    <name type="primary">pyrI</name>
    <name type="ordered locus">BL0793</name>
</gene>
<organism>
    <name type="scientific">Bifidobacterium longum (strain NCC 2705)</name>
    <dbReference type="NCBI Taxonomy" id="206672"/>
    <lineage>
        <taxon>Bacteria</taxon>
        <taxon>Bacillati</taxon>
        <taxon>Actinomycetota</taxon>
        <taxon>Actinomycetes</taxon>
        <taxon>Bifidobacteriales</taxon>
        <taxon>Bifidobacteriaceae</taxon>
        <taxon>Bifidobacterium</taxon>
    </lineage>
</organism>